<accession>B5FL08</accession>
<dbReference type="EMBL" id="CP001144">
    <property type="protein sequence ID" value="ACH75593.1"/>
    <property type="molecule type" value="Genomic_DNA"/>
</dbReference>
<dbReference type="RefSeq" id="WP_000739886.1">
    <property type="nucleotide sequence ID" value="NC_011205.1"/>
</dbReference>
<dbReference type="SMR" id="B5FL08"/>
<dbReference type="KEGG" id="sed:SeD_A2216"/>
<dbReference type="HOGENOM" id="CLU_071003_1_2_6"/>
<dbReference type="Proteomes" id="UP000008322">
    <property type="component" value="Chromosome"/>
</dbReference>
<dbReference type="GO" id="GO:0042597">
    <property type="term" value="C:periplasmic space"/>
    <property type="evidence" value="ECO:0007669"/>
    <property type="project" value="UniProtKB-SubCell"/>
</dbReference>
<dbReference type="Gene3D" id="2.40.128.110">
    <property type="entry name" value="Lipid/polyisoprenoid-binding, YceI-like"/>
    <property type="match status" value="1"/>
</dbReference>
<dbReference type="HAMAP" id="MF_00780">
    <property type="entry name" value="UPF0312"/>
    <property type="match status" value="1"/>
</dbReference>
<dbReference type="InterPro" id="IPR007372">
    <property type="entry name" value="Lipid/polyisoprenoid-bd_YceI"/>
</dbReference>
<dbReference type="InterPro" id="IPR036761">
    <property type="entry name" value="TTHA0802/YceI-like_sf"/>
</dbReference>
<dbReference type="InterPro" id="IPR023480">
    <property type="entry name" value="UPF0312/YceI"/>
</dbReference>
<dbReference type="NCBIfam" id="NF002994">
    <property type="entry name" value="PRK03757.1"/>
    <property type="match status" value="1"/>
</dbReference>
<dbReference type="PANTHER" id="PTHR34406">
    <property type="entry name" value="PROTEIN YCEI"/>
    <property type="match status" value="1"/>
</dbReference>
<dbReference type="PANTHER" id="PTHR34406:SF1">
    <property type="entry name" value="PROTEIN YCEI"/>
    <property type="match status" value="1"/>
</dbReference>
<dbReference type="Pfam" id="PF04264">
    <property type="entry name" value="YceI"/>
    <property type="match status" value="1"/>
</dbReference>
<dbReference type="SMART" id="SM00867">
    <property type="entry name" value="YceI"/>
    <property type="match status" value="1"/>
</dbReference>
<dbReference type="SUPFAM" id="SSF101874">
    <property type="entry name" value="YceI-like"/>
    <property type="match status" value="1"/>
</dbReference>
<sequence length="191" mass="21023">MKKNLLGFTLASLLFTTGSAVAAEYKIDKEGQHAFVNFRIQHLGYSWLYGTFKDFDGTFTFDEKNPSADKVNVTINTNSVDTNHAERDKHLRSAEFLNVAKFPQATFTSTSVKKEGDELDITGNLTLNGVTKPVTLEAKLMGQGDDPWGGKRAGFEAEGKIKLKDFNITTDLGPASQEVELIISVEGVQQK</sequence>
<evidence type="ECO:0000255" key="1">
    <source>
        <dbReference type="HAMAP-Rule" id="MF_00780"/>
    </source>
</evidence>
<keyword id="KW-0574">Periplasm</keyword>
<keyword id="KW-0732">Signal</keyword>
<name>YCEI_SALDC</name>
<comment type="subcellular location">
    <subcellularLocation>
        <location evidence="1">Periplasm</location>
    </subcellularLocation>
</comment>
<comment type="similarity">
    <text evidence="1">Belongs to the UPF0312 family. Type 1 subfamily.</text>
</comment>
<organism>
    <name type="scientific">Salmonella dublin (strain CT_02021853)</name>
    <dbReference type="NCBI Taxonomy" id="439851"/>
    <lineage>
        <taxon>Bacteria</taxon>
        <taxon>Pseudomonadati</taxon>
        <taxon>Pseudomonadota</taxon>
        <taxon>Gammaproteobacteria</taxon>
        <taxon>Enterobacterales</taxon>
        <taxon>Enterobacteriaceae</taxon>
        <taxon>Salmonella</taxon>
    </lineage>
</organism>
<proteinExistence type="inferred from homology"/>
<feature type="signal peptide" evidence="1">
    <location>
        <begin position="1"/>
        <end position="22"/>
    </location>
</feature>
<feature type="chain" id="PRO_1000200477" description="Protein YceI">
    <location>
        <begin position="23"/>
        <end position="191"/>
    </location>
</feature>
<protein>
    <recommendedName>
        <fullName evidence="1">Protein YceI</fullName>
    </recommendedName>
</protein>
<reference key="1">
    <citation type="journal article" date="2011" name="J. Bacteriol.">
        <title>Comparative genomics of 28 Salmonella enterica isolates: evidence for CRISPR-mediated adaptive sublineage evolution.</title>
        <authorList>
            <person name="Fricke W.F."/>
            <person name="Mammel M.K."/>
            <person name="McDermott P.F."/>
            <person name="Tartera C."/>
            <person name="White D.G."/>
            <person name="Leclerc J.E."/>
            <person name="Ravel J."/>
            <person name="Cebula T.A."/>
        </authorList>
    </citation>
    <scope>NUCLEOTIDE SEQUENCE [LARGE SCALE GENOMIC DNA]</scope>
    <source>
        <strain>CT_02021853</strain>
    </source>
</reference>
<gene>
    <name evidence="1" type="primary">yceI</name>
    <name type="ordered locus">SeD_A2216</name>
</gene>